<dbReference type="EMBL" id="D17520">
    <property type="protein sequence ID" value="BAA04470.1"/>
    <property type="molecule type" value="mRNA"/>
</dbReference>
<dbReference type="PIR" id="JC2318">
    <property type="entry name" value="JC2318"/>
</dbReference>
<dbReference type="SMR" id="P20757"/>
<dbReference type="STRING" id="9940.ENSOARP00000003247"/>
<dbReference type="MEROPS" id="I04.953"/>
<dbReference type="GlyCosmos" id="P20757">
    <property type="glycosylation" value="1 site, No reported glycans"/>
</dbReference>
<dbReference type="PaxDb" id="9940-ENSOARP00000003247"/>
<dbReference type="Ensembl" id="ENSOART00185019244">
    <property type="protein sequence ID" value="ENSOARP00185009605"/>
    <property type="gene ID" value="ENSOARG00185011798"/>
</dbReference>
<dbReference type="Ensembl" id="ENSOART00225002673">
    <property type="protein sequence ID" value="ENSOARP00225001020"/>
    <property type="gene ID" value="ENSOARG00225001748"/>
</dbReference>
<dbReference type="Ensembl" id="ENSOART00260028783">
    <property type="protein sequence ID" value="ENSOARP00260014421"/>
    <property type="gene ID" value="ENSOARG00260017739"/>
</dbReference>
<dbReference type="eggNOG" id="KOG2392">
    <property type="taxonomic scope" value="Eukaryota"/>
</dbReference>
<dbReference type="Proteomes" id="UP000002356">
    <property type="component" value="Unplaced"/>
</dbReference>
<dbReference type="GO" id="GO:0005615">
    <property type="term" value="C:extracellular space"/>
    <property type="evidence" value="ECO:0007669"/>
    <property type="project" value="InterPro"/>
</dbReference>
<dbReference type="GO" id="GO:0004867">
    <property type="term" value="F:serine-type endopeptidase inhibitor activity"/>
    <property type="evidence" value="ECO:0007669"/>
    <property type="project" value="InterPro"/>
</dbReference>
<dbReference type="GO" id="GO:0010718">
    <property type="term" value="P:positive regulation of epithelial to mesenchymal transition"/>
    <property type="evidence" value="ECO:0000250"/>
    <property type="project" value="UniProtKB"/>
</dbReference>
<dbReference type="GO" id="GO:0042981">
    <property type="term" value="P:regulation of apoptotic process"/>
    <property type="evidence" value="ECO:0007669"/>
    <property type="project" value="TreeGrafter"/>
</dbReference>
<dbReference type="GO" id="GO:0003081">
    <property type="term" value="P:regulation of systemic arterial blood pressure by renin-angiotensin"/>
    <property type="evidence" value="ECO:0007669"/>
    <property type="project" value="InterPro"/>
</dbReference>
<dbReference type="GO" id="GO:0042310">
    <property type="term" value="P:vasoconstriction"/>
    <property type="evidence" value="ECO:0007669"/>
    <property type="project" value="UniProtKB-KW"/>
</dbReference>
<dbReference type="Gene3D" id="2.30.39.10">
    <property type="entry name" value="Alpha-1-antitrypsin, domain 1"/>
    <property type="match status" value="1"/>
</dbReference>
<dbReference type="Gene3D" id="3.30.497.10">
    <property type="entry name" value="Antithrombin, subunit I, domain 2"/>
    <property type="match status" value="1"/>
</dbReference>
<dbReference type="InterPro" id="IPR000227">
    <property type="entry name" value="Angiotensinogen"/>
</dbReference>
<dbReference type="InterPro" id="IPR023795">
    <property type="entry name" value="Serpin_CS"/>
</dbReference>
<dbReference type="InterPro" id="IPR023796">
    <property type="entry name" value="Serpin_dom"/>
</dbReference>
<dbReference type="InterPro" id="IPR000215">
    <property type="entry name" value="Serpin_fam"/>
</dbReference>
<dbReference type="InterPro" id="IPR036186">
    <property type="entry name" value="Serpin_sf"/>
</dbReference>
<dbReference type="InterPro" id="IPR042178">
    <property type="entry name" value="Serpin_sf_1"/>
</dbReference>
<dbReference type="InterPro" id="IPR042185">
    <property type="entry name" value="Serpin_sf_2"/>
</dbReference>
<dbReference type="PANTHER" id="PTHR11461:SF13">
    <property type="entry name" value="ANGIOTENSINOGEN"/>
    <property type="match status" value="1"/>
</dbReference>
<dbReference type="PANTHER" id="PTHR11461">
    <property type="entry name" value="SERINE PROTEASE INHIBITOR, SERPIN"/>
    <property type="match status" value="1"/>
</dbReference>
<dbReference type="Pfam" id="PF00079">
    <property type="entry name" value="Serpin"/>
    <property type="match status" value="1"/>
</dbReference>
<dbReference type="PRINTS" id="PR00654">
    <property type="entry name" value="ANGIOTENSNGN"/>
</dbReference>
<dbReference type="SMART" id="SM00093">
    <property type="entry name" value="SERPIN"/>
    <property type="match status" value="1"/>
</dbReference>
<dbReference type="SUPFAM" id="SSF56574">
    <property type="entry name" value="Serpins"/>
    <property type="match status" value="1"/>
</dbReference>
<dbReference type="PROSITE" id="PS00284">
    <property type="entry name" value="SERPIN"/>
    <property type="match status" value="1"/>
</dbReference>
<gene>
    <name type="primary">AGT</name>
    <name type="synonym">SERPINA8</name>
</gene>
<keyword id="KW-0903">Direct protein sequencing</keyword>
<keyword id="KW-1015">Disulfide bond</keyword>
<keyword id="KW-0325">Glycoprotein</keyword>
<keyword id="KW-1185">Reference proteome</keyword>
<keyword id="KW-0964">Secreted</keyword>
<keyword id="KW-0732">Signal</keyword>
<keyword id="KW-0838">Vasoactive</keyword>
<keyword id="KW-0839">Vasoconstrictor</keyword>
<accession>P20757</accession>
<organism>
    <name type="scientific">Ovis aries</name>
    <name type="common">Sheep</name>
    <dbReference type="NCBI Taxonomy" id="9940"/>
    <lineage>
        <taxon>Eukaryota</taxon>
        <taxon>Metazoa</taxon>
        <taxon>Chordata</taxon>
        <taxon>Craniata</taxon>
        <taxon>Vertebrata</taxon>
        <taxon>Euteleostomi</taxon>
        <taxon>Mammalia</taxon>
        <taxon>Eutheria</taxon>
        <taxon>Laurasiatheria</taxon>
        <taxon>Artiodactyla</taxon>
        <taxon>Ruminantia</taxon>
        <taxon>Pecora</taxon>
        <taxon>Bovidae</taxon>
        <taxon>Caprinae</taxon>
        <taxon>Ovis</taxon>
    </lineage>
</organism>
<protein>
    <recommendedName>
        <fullName>Angiotensinogen</fullName>
    </recommendedName>
    <alternativeName>
        <fullName>Serpin A8</fullName>
    </alternativeName>
    <component>
        <recommendedName>
            <fullName>Angiotensin-1</fullName>
        </recommendedName>
        <alternativeName>
            <fullName>Angiotensin 1-10</fullName>
        </alternativeName>
        <alternativeName>
            <fullName>Angiotensin I</fullName>
            <shortName>Ang I</shortName>
        </alternativeName>
    </component>
    <component>
        <recommendedName>
            <fullName>Angiotensin-2</fullName>
        </recommendedName>
        <alternativeName>
            <fullName>Angiotensin 1-8</fullName>
        </alternativeName>
        <alternativeName>
            <fullName>Angiotensin II</fullName>
            <shortName>Ang II</shortName>
        </alternativeName>
    </component>
    <component>
        <recommendedName>
            <fullName>Angiotensin-3</fullName>
        </recommendedName>
        <alternativeName>
            <fullName>Angiotensin 2-8</fullName>
        </alternativeName>
        <alternativeName>
            <fullName>Angiotensin III</fullName>
            <shortName>Ang III</shortName>
        </alternativeName>
        <alternativeName>
            <fullName>Des-Asp[1]-angiotensin II</fullName>
        </alternativeName>
    </component>
    <component>
        <recommendedName>
            <fullName>Angiotensin-4</fullName>
        </recommendedName>
        <alternativeName>
            <fullName>Angiotensin 3-8</fullName>
        </alternativeName>
        <alternativeName>
            <fullName>Angiotensin IV</fullName>
            <shortName>Ang IV</shortName>
        </alternativeName>
    </component>
    <component>
        <recommendedName>
            <fullName>Angiotensin 1-9</fullName>
        </recommendedName>
    </component>
    <component>
        <recommendedName>
            <fullName>Angiotensin 1-7</fullName>
        </recommendedName>
    </component>
    <component>
        <recommendedName>
            <fullName>Angiotensin 1-5</fullName>
        </recommendedName>
    </component>
    <component>
        <recommendedName>
            <fullName>Angiotensin 1-4</fullName>
        </recommendedName>
    </component>
</protein>
<name>ANGT_SHEEP</name>
<comment type="function">
    <text evidence="3">Essential component of the renin-angiotensin system (RAS), a potent regulator of blood pressure, body fluid and electrolyte homeostasis.</text>
</comment>
<comment type="function">
    <molecule>Angiotensin-2</molecule>
    <text evidence="2 3">Acts directly on vascular smooth muscle as a potent vasoconstrictor, affects cardiac contractility and heart rate through its action on the sympathetic nervous system, and alters renal sodium and water absorption through its ability to stimulate the zona glomerulosa cells of the adrenal cortex to synthesize and secrete aldosterone. Acts by binding to angiotensin receptors AGTR1 and AGTR2. Also binds the DEAR/FBXW7-AS1 receptor.</text>
</comment>
<comment type="function">
    <molecule>Angiotensin-3</molecule>
    <text evidence="3">Stimulates aldosterone release.</text>
</comment>
<comment type="function">
    <molecule>Angiotensin 1-7</molecule>
    <text evidence="4">Is a ligand for the G-protein coupled receptor MAS1. Has vasodilator and antidiuretic effects. Has an antithrombotic effect that involves MAS1-mediated release of nitric oxide from platelets.</text>
</comment>
<comment type="subcellular location">
    <subcellularLocation>
        <location evidence="9">Secreted</location>
    </subcellularLocation>
</comment>
<comment type="PTM">
    <text evidence="3">In response to low blood pressure, the enzyme renin/REN cleaves angiotensinogen to produce angiotensin-1. Angiotensin-1 is a substrate of ACE (angiotensin converting enzyme) that removes a dipeptide to yield the physiologically active peptide angiotensin-2. Angiotensin-1 and angiotensin-2 can be further processed to generate angiotensin-3, angiotensin-4. Angiotensin 1-9 is cleaved from angiotensin-1 by ACE2 and can be further processed by ACE to produce angiotensin 1-7, angiotensin 1-5 and angiotensin 1-4. Angiotensin 1-7 has also been proposed to be cleaved from angiotensin-2 by ACE2 or from angiotensin-1 by MME (neprilysin) (By similarity).</text>
</comment>
<comment type="PTM">
    <text evidence="3">The disulfide bond is labile. Angiotensinogen is present in the circulation in a near 40:60 ratio with the oxidized disulfide-bonded form, which preferentially interacts with receptor-bound renin (By similarity).</text>
</comment>
<comment type="similarity">
    <text evidence="8">Belongs to the serpin family.</text>
</comment>
<reference key="1">
    <citation type="journal article" date="1994" name="Biosci. Biotechnol. Biochem.">
        <title>Sequencing and expression of sheep angiotensinogen cDNA.</title>
        <authorList>
            <person name="Nagase M."/>
            <person name="Suzuki F."/>
            <person name="Fukamizu A."/>
            <person name="Takeda N."/>
            <person name="Takeuchi K."/>
            <person name="Murakami K."/>
            <person name="Nakamura Y."/>
        </authorList>
    </citation>
    <scope>NUCLEOTIDE SEQUENCE [MRNA]</scope>
    <source>
        <tissue>Liver</tissue>
    </source>
</reference>
<reference key="2">
    <citation type="journal article" date="1986" name="Eur. J. Biochem.">
        <title>Purification and characterization of ovine angiotensinogen.</title>
        <authorList>
            <person name="Fernley R.T."/>
            <person name="John M."/>
            <person name="Niall H.D."/>
            <person name="Coghlan J.P."/>
        </authorList>
    </citation>
    <scope>PROTEIN SEQUENCE OF 25-39</scope>
</reference>
<evidence type="ECO:0000250" key="1"/>
<evidence type="ECO:0000250" key="2">
    <source>
        <dbReference type="UniProtKB" id="P01015"/>
    </source>
</evidence>
<evidence type="ECO:0000250" key="3">
    <source>
        <dbReference type="UniProtKB" id="P01019"/>
    </source>
</evidence>
<evidence type="ECO:0000250" key="4">
    <source>
        <dbReference type="UniProtKB" id="P11859"/>
    </source>
</evidence>
<evidence type="ECO:0000255" key="5"/>
<evidence type="ECO:0000256" key="6">
    <source>
        <dbReference type="SAM" id="MobiDB-lite"/>
    </source>
</evidence>
<evidence type="ECO:0000269" key="7">
    <source>
    </source>
</evidence>
<evidence type="ECO:0000305" key="8"/>
<evidence type="ECO:0000305" key="9">
    <source>
    </source>
</evidence>
<sequence length="476" mass="51304">MAPAGLSLGATILCLLAWAGLAAGDRVYIHPFHLLVHSKSNCDQLEKPSVETPADPTLTPVPIQTKSSPVDEEALWEQLVRATEKLEAEDRLRASEVGLLLNFMGFHVYKTLSETWSVASGLVFSPVALFSTLTSFYTGALDPTASRLQAFLGVPGEGQGCTSRLDGRKVLSSLQTIQGLLVAPGGASSQARLLLSTVVGLFTAPGLHLKQPFVQGLSSFAPITLPRSLDLSTDPNLAAEKINRFMHSATGWNMGRPLAAASPDSTLLFNAYVHFQGKMKGFSLLPGLTEFWVDNTTSVPVPMLSGSGTFHYWSDNQNHLSMTRVPLSANGYLLLIQPHHTLDLRKVEALIFQHNFLTRMKNLSPRAIHLTVPQLTLKASYDLQDLLAQAKLPTLLGAEANLGKISDANLRVGKVLNSVLFELKADGEQAPESVPQPAGPEALEVTLNSPFLLAVLERSSGALHFLGRVSRPLSAE</sequence>
<proteinExistence type="evidence at protein level"/>
<feature type="signal peptide" evidence="7">
    <location>
        <begin position="1"/>
        <end position="24"/>
    </location>
</feature>
<feature type="chain" id="PRO_0000032472" description="Angiotensinogen">
    <location>
        <begin position="25"/>
        <end position="476"/>
    </location>
</feature>
<feature type="peptide" id="PRO_0000032473" description="Angiotensin-1" evidence="3">
    <location>
        <begin position="25"/>
        <end position="34"/>
    </location>
</feature>
<feature type="peptide" id="PRO_0000420679" description="Angiotensin 1-9" evidence="3">
    <location>
        <begin position="25"/>
        <end position="33"/>
    </location>
</feature>
<feature type="peptide" id="PRO_0000032474" description="Angiotensin-2" evidence="3">
    <location>
        <begin position="25"/>
        <end position="32"/>
    </location>
</feature>
<feature type="peptide" id="PRO_0000420680" description="Angiotensin 1-7" evidence="3">
    <location>
        <begin position="25"/>
        <end position="31"/>
    </location>
</feature>
<feature type="peptide" id="PRO_0000420681" description="Angiotensin 1-5" evidence="3">
    <location>
        <begin position="25"/>
        <end position="29"/>
    </location>
</feature>
<feature type="peptide" id="PRO_0000420682" description="Angiotensin 1-4" evidence="3">
    <location>
        <begin position="25"/>
        <end position="28"/>
    </location>
</feature>
<feature type="peptide" id="PRO_0000032475" description="Angiotensin-3" evidence="3">
    <location>
        <begin position="26"/>
        <end position="32"/>
    </location>
</feature>
<feature type="peptide" id="PRO_0000420683" description="Angiotensin-4" evidence="3">
    <location>
        <begin position="27"/>
        <end position="32"/>
    </location>
</feature>
<feature type="region of interest" description="Disordered" evidence="6">
    <location>
        <begin position="45"/>
        <end position="64"/>
    </location>
</feature>
<feature type="glycosylation site" description="N-linked (GlcNAc...) asparagine" evidence="5">
    <location>
        <position position="295"/>
    </location>
</feature>
<feature type="disulfide bond" evidence="1">
    <location>
        <begin position="42"/>
        <end position="161"/>
    </location>
</feature>